<protein>
    <recommendedName>
        <fullName evidence="1">ATP synthase subunit alpha</fullName>
        <ecNumber evidence="1">7.1.2.2</ecNumber>
    </recommendedName>
    <alternativeName>
        <fullName evidence="1">ATP synthase F1 sector subunit alpha</fullName>
    </alternativeName>
    <alternativeName>
        <fullName evidence="1">F-ATPase subunit alpha</fullName>
    </alternativeName>
</protein>
<organism>
    <name type="scientific">Herpetosiphon aurantiacus (strain ATCC 23779 / DSM 785 / 114-95)</name>
    <dbReference type="NCBI Taxonomy" id="316274"/>
    <lineage>
        <taxon>Bacteria</taxon>
        <taxon>Bacillati</taxon>
        <taxon>Chloroflexota</taxon>
        <taxon>Chloroflexia</taxon>
        <taxon>Herpetosiphonales</taxon>
        <taxon>Herpetosiphonaceae</taxon>
        <taxon>Herpetosiphon</taxon>
    </lineage>
</organism>
<sequence length="517" mass="55514">MAVTAEDILSRLKASIQQPVGGDPTAVNVGTVASVGDGVARISGLRDVMASELLEFKQTKSGETVMGIALNLEKDNVAAVILGDYLEIEEGDLVRSTGKIISVPVGQELLGRVVDPLGRPLDGKGPISASKTREVERIAPGVIERKSVSQPVQTGILAIDALIPIGRGQRELIIGDRQTGKTAIAIDTIINQRGQGMVCVYVAIGQKRSKVAQTITTLEQNGAMDYTIVVNASASESAALQYIAPYSGCAIAEEVMEVGVTVDGNLVKDALIIYDDLSKHAVAYRQVSLLLRRPPGREAYPGDVFYLHSRLLERAARLSEVNGGGSITALPIIETQANDVSAYIPTNVISITDGQIFLESDLFYAGQRPALNVGISVSRVGSSAQTKAMKTVAGKMKLELAQFRELAAFAMFASDLDAGTKAQIERGQRLSELLKQPQYQPIALEDQVIILWVAGNGFLDDVPVARINDFKRDFWQFIHSSYAEVGRAIASEKVLSEATIASLRKAVTEFKQTASYK</sequence>
<accession>A9AVV2</accession>
<proteinExistence type="inferred from homology"/>
<comment type="function">
    <text evidence="1">Produces ATP from ADP in the presence of a proton gradient across the membrane. The alpha chain is a regulatory subunit.</text>
</comment>
<comment type="catalytic activity">
    <reaction evidence="1">
        <text>ATP + H2O + 4 H(+)(in) = ADP + phosphate + 5 H(+)(out)</text>
        <dbReference type="Rhea" id="RHEA:57720"/>
        <dbReference type="ChEBI" id="CHEBI:15377"/>
        <dbReference type="ChEBI" id="CHEBI:15378"/>
        <dbReference type="ChEBI" id="CHEBI:30616"/>
        <dbReference type="ChEBI" id="CHEBI:43474"/>
        <dbReference type="ChEBI" id="CHEBI:456216"/>
        <dbReference type="EC" id="7.1.2.2"/>
    </reaction>
</comment>
<comment type="subunit">
    <text evidence="1">F-type ATPases have 2 components, CF(1) - the catalytic core - and CF(0) - the membrane proton channel. CF(1) has five subunits: alpha(3), beta(3), gamma(1), delta(1), epsilon(1). CF(0) has three main subunits: a(1), b(2) and c(9-12). The alpha and beta chains form an alternating ring which encloses part of the gamma chain. CF(1) is attached to CF(0) by a central stalk formed by the gamma and epsilon chains, while a peripheral stalk is formed by the delta and b chains.</text>
</comment>
<comment type="subcellular location">
    <subcellularLocation>
        <location evidence="1">Cell membrane</location>
        <topology evidence="1">Peripheral membrane protein</topology>
    </subcellularLocation>
</comment>
<comment type="similarity">
    <text evidence="1">Belongs to the ATPase alpha/beta chains family.</text>
</comment>
<name>ATPA_HERA2</name>
<feature type="chain" id="PRO_1000143393" description="ATP synthase subunit alpha">
    <location>
        <begin position="1"/>
        <end position="517"/>
    </location>
</feature>
<feature type="binding site" evidence="1">
    <location>
        <begin position="175"/>
        <end position="182"/>
    </location>
    <ligand>
        <name>ATP</name>
        <dbReference type="ChEBI" id="CHEBI:30616"/>
    </ligand>
</feature>
<feature type="site" description="Required for activity" evidence="1">
    <location>
        <position position="376"/>
    </location>
</feature>
<dbReference type="EC" id="7.1.2.2" evidence="1"/>
<dbReference type="EMBL" id="CP000875">
    <property type="protein sequence ID" value="ABX06702.1"/>
    <property type="molecule type" value="Genomic_DNA"/>
</dbReference>
<dbReference type="SMR" id="A9AVV2"/>
<dbReference type="FunCoup" id="A9AVV2">
    <property type="interactions" value="489"/>
</dbReference>
<dbReference type="STRING" id="316274.Haur_4070"/>
<dbReference type="KEGG" id="hau:Haur_4070"/>
<dbReference type="eggNOG" id="COG0056">
    <property type="taxonomic scope" value="Bacteria"/>
</dbReference>
<dbReference type="HOGENOM" id="CLU_010091_2_1_0"/>
<dbReference type="InParanoid" id="A9AVV2"/>
<dbReference type="Proteomes" id="UP000000787">
    <property type="component" value="Chromosome"/>
</dbReference>
<dbReference type="GO" id="GO:0005886">
    <property type="term" value="C:plasma membrane"/>
    <property type="evidence" value="ECO:0007669"/>
    <property type="project" value="UniProtKB-SubCell"/>
</dbReference>
<dbReference type="GO" id="GO:0045259">
    <property type="term" value="C:proton-transporting ATP synthase complex"/>
    <property type="evidence" value="ECO:0007669"/>
    <property type="project" value="UniProtKB-KW"/>
</dbReference>
<dbReference type="GO" id="GO:0043531">
    <property type="term" value="F:ADP binding"/>
    <property type="evidence" value="ECO:0007669"/>
    <property type="project" value="TreeGrafter"/>
</dbReference>
<dbReference type="GO" id="GO:0005524">
    <property type="term" value="F:ATP binding"/>
    <property type="evidence" value="ECO:0007669"/>
    <property type="project" value="UniProtKB-UniRule"/>
</dbReference>
<dbReference type="GO" id="GO:0046933">
    <property type="term" value="F:proton-transporting ATP synthase activity, rotational mechanism"/>
    <property type="evidence" value="ECO:0007669"/>
    <property type="project" value="UniProtKB-UniRule"/>
</dbReference>
<dbReference type="CDD" id="cd18113">
    <property type="entry name" value="ATP-synt_F1_alpha_C"/>
    <property type="match status" value="1"/>
</dbReference>
<dbReference type="CDD" id="cd18116">
    <property type="entry name" value="ATP-synt_F1_alpha_N"/>
    <property type="match status" value="1"/>
</dbReference>
<dbReference type="CDD" id="cd01132">
    <property type="entry name" value="F1-ATPase_alpha_CD"/>
    <property type="match status" value="1"/>
</dbReference>
<dbReference type="FunFam" id="1.20.150.20:FF:000001">
    <property type="entry name" value="ATP synthase subunit alpha"/>
    <property type="match status" value="1"/>
</dbReference>
<dbReference type="FunFam" id="3.40.50.300:FF:000002">
    <property type="entry name" value="ATP synthase subunit alpha"/>
    <property type="match status" value="1"/>
</dbReference>
<dbReference type="Gene3D" id="2.40.30.20">
    <property type="match status" value="1"/>
</dbReference>
<dbReference type="Gene3D" id="1.20.150.20">
    <property type="entry name" value="ATP synthase alpha/beta chain, C-terminal domain"/>
    <property type="match status" value="1"/>
</dbReference>
<dbReference type="Gene3D" id="3.40.50.300">
    <property type="entry name" value="P-loop containing nucleotide triphosphate hydrolases"/>
    <property type="match status" value="1"/>
</dbReference>
<dbReference type="HAMAP" id="MF_01346">
    <property type="entry name" value="ATP_synth_alpha_bact"/>
    <property type="match status" value="1"/>
</dbReference>
<dbReference type="InterPro" id="IPR023366">
    <property type="entry name" value="ATP_synth_asu-like_sf"/>
</dbReference>
<dbReference type="InterPro" id="IPR000793">
    <property type="entry name" value="ATP_synth_asu_C"/>
</dbReference>
<dbReference type="InterPro" id="IPR038376">
    <property type="entry name" value="ATP_synth_asu_C_sf"/>
</dbReference>
<dbReference type="InterPro" id="IPR033732">
    <property type="entry name" value="ATP_synth_F1_a_nt-bd_dom"/>
</dbReference>
<dbReference type="InterPro" id="IPR005294">
    <property type="entry name" value="ATP_synth_F1_asu"/>
</dbReference>
<dbReference type="InterPro" id="IPR020003">
    <property type="entry name" value="ATPase_a/bsu_AS"/>
</dbReference>
<dbReference type="InterPro" id="IPR004100">
    <property type="entry name" value="ATPase_F1/V1/A1_a/bsu_N"/>
</dbReference>
<dbReference type="InterPro" id="IPR036121">
    <property type="entry name" value="ATPase_F1/V1/A1_a/bsu_N_sf"/>
</dbReference>
<dbReference type="InterPro" id="IPR000194">
    <property type="entry name" value="ATPase_F1/V1/A1_a/bsu_nucl-bd"/>
</dbReference>
<dbReference type="InterPro" id="IPR027417">
    <property type="entry name" value="P-loop_NTPase"/>
</dbReference>
<dbReference type="NCBIfam" id="TIGR00962">
    <property type="entry name" value="atpA"/>
    <property type="match status" value="1"/>
</dbReference>
<dbReference type="NCBIfam" id="NF009884">
    <property type="entry name" value="PRK13343.1"/>
    <property type="match status" value="1"/>
</dbReference>
<dbReference type="PANTHER" id="PTHR48082">
    <property type="entry name" value="ATP SYNTHASE SUBUNIT ALPHA, MITOCHONDRIAL"/>
    <property type="match status" value="1"/>
</dbReference>
<dbReference type="PANTHER" id="PTHR48082:SF2">
    <property type="entry name" value="ATP SYNTHASE SUBUNIT ALPHA, MITOCHONDRIAL"/>
    <property type="match status" value="1"/>
</dbReference>
<dbReference type="Pfam" id="PF00006">
    <property type="entry name" value="ATP-synt_ab"/>
    <property type="match status" value="1"/>
</dbReference>
<dbReference type="Pfam" id="PF00306">
    <property type="entry name" value="ATP-synt_ab_C"/>
    <property type="match status" value="1"/>
</dbReference>
<dbReference type="Pfam" id="PF02874">
    <property type="entry name" value="ATP-synt_ab_N"/>
    <property type="match status" value="1"/>
</dbReference>
<dbReference type="PIRSF" id="PIRSF039088">
    <property type="entry name" value="F_ATPase_subunit_alpha"/>
    <property type="match status" value="1"/>
</dbReference>
<dbReference type="SUPFAM" id="SSF47917">
    <property type="entry name" value="C-terminal domain of alpha and beta subunits of F1 ATP synthase"/>
    <property type="match status" value="1"/>
</dbReference>
<dbReference type="SUPFAM" id="SSF50615">
    <property type="entry name" value="N-terminal domain of alpha and beta subunits of F1 ATP synthase"/>
    <property type="match status" value="1"/>
</dbReference>
<dbReference type="SUPFAM" id="SSF52540">
    <property type="entry name" value="P-loop containing nucleoside triphosphate hydrolases"/>
    <property type="match status" value="1"/>
</dbReference>
<dbReference type="PROSITE" id="PS00152">
    <property type="entry name" value="ATPASE_ALPHA_BETA"/>
    <property type="match status" value="1"/>
</dbReference>
<keyword id="KW-0066">ATP synthesis</keyword>
<keyword id="KW-0067">ATP-binding</keyword>
<keyword id="KW-1003">Cell membrane</keyword>
<keyword id="KW-0139">CF(1)</keyword>
<keyword id="KW-0375">Hydrogen ion transport</keyword>
<keyword id="KW-0406">Ion transport</keyword>
<keyword id="KW-0472">Membrane</keyword>
<keyword id="KW-0547">Nucleotide-binding</keyword>
<keyword id="KW-1278">Translocase</keyword>
<keyword id="KW-0813">Transport</keyword>
<reference key="1">
    <citation type="journal article" date="2011" name="Stand. Genomic Sci.">
        <title>Complete genome sequence of the filamentous gliding predatory bacterium Herpetosiphon aurantiacus type strain (114-95(T)).</title>
        <authorList>
            <person name="Kiss H."/>
            <person name="Nett M."/>
            <person name="Domin N."/>
            <person name="Martin K."/>
            <person name="Maresca J.A."/>
            <person name="Copeland A."/>
            <person name="Lapidus A."/>
            <person name="Lucas S."/>
            <person name="Berry K.W."/>
            <person name="Glavina Del Rio T."/>
            <person name="Dalin E."/>
            <person name="Tice H."/>
            <person name="Pitluck S."/>
            <person name="Richardson P."/>
            <person name="Bruce D."/>
            <person name="Goodwin L."/>
            <person name="Han C."/>
            <person name="Detter J.C."/>
            <person name="Schmutz J."/>
            <person name="Brettin T."/>
            <person name="Land M."/>
            <person name="Hauser L."/>
            <person name="Kyrpides N.C."/>
            <person name="Ivanova N."/>
            <person name="Goeker M."/>
            <person name="Woyke T."/>
            <person name="Klenk H.P."/>
            <person name="Bryant D.A."/>
        </authorList>
    </citation>
    <scope>NUCLEOTIDE SEQUENCE [LARGE SCALE GENOMIC DNA]</scope>
    <source>
        <strain>ATCC 23779 / DSM 785 / 114-95</strain>
    </source>
</reference>
<gene>
    <name evidence="1" type="primary">atpA</name>
    <name type="ordered locus">Haur_4070</name>
</gene>
<evidence type="ECO:0000255" key="1">
    <source>
        <dbReference type="HAMAP-Rule" id="MF_01346"/>
    </source>
</evidence>